<evidence type="ECO:0000255" key="1">
    <source>
        <dbReference type="HAMAP-Rule" id="MF_01569"/>
    </source>
</evidence>
<name>SYP_FRATT</name>
<comment type="function">
    <text evidence="1">Catalyzes the attachment of proline to tRNA(Pro) in a two-step reaction: proline is first activated by ATP to form Pro-AMP and then transferred to the acceptor end of tRNA(Pro). As ProRS can inadvertently accommodate and process non-cognate amino acids such as alanine and cysteine, to avoid such errors it has two additional distinct editing activities against alanine. One activity is designated as 'pretransfer' editing and involves the tRNA(Pro)-independent hydrolysis of activated Ala-AMP. The other activity is designated 'posttransfer' editing and involves deacylation of mischarged Ala-tRNA(Pro). The misacylated Cys-tRNA(Pro) is not edited by ProRS.</text>
</comment>
<comment type="catalytic activity">
    <reaction evidence="1">
        <text>tRNA(Pro) + L-proline + ATP = L-prolyl-tRNA(Pro) + AMP + diphosphate</text>
        <dbReference type="Rhea" id="RHEA:14305"/>
        <dbReference type="Rhea" id="RHEA-COMP:9700"/>
        <dbReference type="Rhea" id="RHEA-COMP:9702"/>
        <dbReference type="ChEBI" id="CHEBI:30616"/>
        <dbReference type="ChEBI" id="CHEBI:33019"/>
        <dbReference type="ChEBI" id="CHEBI:60039"/>
        <dbReference type="ChEBI" id="CHEBI:78442"/>
        <dbReference type="ChEBI" id="CHEBI:78532"/>
        <dbReference type="ChEBI" id="CHEBI:456215"/>
        <dbReference type="EC" id="6.1.1.15"/>
    </reaction>
</comment>
<comment type="subunit">
    <text evidence="1">Homodimer.</text>
</comment>
<comment type="subcellular location">
    <subcellularLocation>
        <location evidence="1">Cytoplasm</location>
    </subcellularLocation>
</comment>
<comment type="domain">
    <text evidence="1">Consists of three domains: the N-terminal catalytic domain, the editing domain and the C-terminal anticodon-binding domain.</text>
</comment>
<comment type="similarity">
    <text evidence="1">Belongs to the class-II aminoacyl-tRNA synthetase family. ProS type 1 subfamily.</text>
</comment>
<organism>
    <name type="scientific">Francisella tularensis subsp. tularensis (strain SCHU S4 / Schu 4)</name>
    <dbReference type="NCBI Taxonomy" id="177416"/>
    <lineage>
        <taxon>Bacteria</taxon>
        <taxon>Pseudomonadati</taxon>
        <taxon>Pseudomonadota</taxon>
        <taxon>Gammaproteobacteria</taxon>
        <taxon>Thiotrichales</taxon>
        <taxon>Francisellaceae</taxon>
        <taxon>Francisella</taxon>
    </lineage>
</organism>
<keyword id="KW-0030">Aminoacyl-tRNA synthetase</keyword>
<keyword id="KW-0067">ATP-binding</keyword>
<keyword id="KW-0963">Cytoplasm</keyword>
<keyword id="KW-0436">Ligase</keyword>
<keyword id="KW-0547">Nucleotide-binding</keyword>
<keyword id="KW-0648">Protein biosynthesis</keyword>
<keyword id="KW-1185">Reference proteome</keyword>
<protein>
    <recommendedName>
        <fullName evidence="1">Proline--tRNA ligase</fullName>
        <ecNumber evidence="1">6.1.1.15</ecNumber>
    </recommendedName>
    <alternativeName>
        <fullName evidence="1">Prolyl-tRNA synthetase</fullName>
        <shortName evidence="1">ProRS</shortName>
    </alternativeName>
</protein>
<gene>
    <name evidence="1" type="primary">proS</name>
    <name type="ordered locus">FTT_1412</name>
</gene>
<feature type="chain" id="PRO_0000248694" description="Proline--tRNA ligase">
    <location>
        <begin position="1"/>
        <end position="565"/>
    </location>
</feature>
<accession>Q5NF37</accession>
<reference key="1">
    <citation type="journal article" date="2005" name="Nat. Genet.">
        <title>The complete genome sequence of Francisella tularensis, the causative agent of tularemia.</title>
        <authorList>
            <person name="Larsson P."/>
            <person name="Oyston P.C.F."/>
            <person name="Chain P."/>
            <person name="Chu M.C."/>
            <person name="Duffield M."/>
            <person name="Fuxelius H.-H."/>
            <person name="Garcia E."/>
            <person name="Haelltorp G."/>
            <person name="Johansson D."/>
            <person name="Isherwood K.E."/>
            <person name="Karp P.D."/>
            <person name="Larsson E."/>
            <person name="Liu Y."/>
            <person name="Michell S."/>
            <person name="Prior J."/>
            <person name="Prior R."/>
            <person name="Malfatti S."/>
            <person name="Sjoestedt A."/>
            <person name="Svensson K."/>
            <person name="Thompson N."/>
            <person name="Vergez L."/>
            <person name="Wagg J.K."/>
            <person name="Wren B.W."/>
            <person name="Lindler L.E."/>
            <person name="Andersson S.G.E."/>
            <person name="Forsman M."/>
            <person name="Titball R.W."/>
        </authorList>
    </citation>
    <scope>NUCLEOTIDE SEQUENCE [LARGE SCALE GENOMIC DNA]</scope>
    <source>
        <strain>SCHU S4 / Schu 4</strain>
    </source>
</reference>
<proteinExistence type="inferred from homology"/>
<dbReference type="EC" id="6.1.1.15" evidence="1"/>
<dbReference type="EMBL" id="AJ749949">
    <property type="protein sequence ID" value="CAG46045.1"/>
    <property type="molecule type" value="Genomic_DNA"/>
</dbReference>
<dbReference type="RefSeq" id="WP_003022224.1">
    <property type="nucleotide sequence ID" value="NC_006570.2"/>
</dbReference>
<dbReference type="RefSeq" id="YP_170355.1">
    <property type="nucleotide sequence ID" value="NC_006570.2"/>
</dbReference>
<dbReference type="SMR" id="Q5NF37"/>
<dbReference type="IntAct" id="Q5NF37">
    <property type="interactions" value="15"/>
</dbReference>
<dbReference type="STRING" id="177416.FTT_1412"/>
<dbReference type="DNASU" id="3191231"/>
<dbReference type="EnsemblBacteria" id="CAG46045">
    <property type="protein sequence ID" value="CAG46045"/>
    <property type="gene ID" value="FTT_1412"/>
</dbReference>
<dbReference type="KEGG" id="ftu:FTT_1412"/>
<dbReference type="eggNOG" id="COG0442">
    <property type="taxonomic scope" value="Bacteria"/>
</dbReference>
<dbReference type="OrthoDB" id="9809052at2"/>
<dbReference type="Proteomes" id="UP000001174">
    <property type="component" value="Chromosome"/>
</dbReference>
<dbReference type="GO" id="GO:0005829">
    <property type="term" value="C:cytosol"/>
    <property type="evidence" value="ECO:0007669"/>
    <property type="project" value="TreeGrafter"/>
</dbReference>
<dbReference type="GO" id="GO:0002161">
    <property type="term" value="F:aminoacyl-tRNA deacylase activity"/>
    <property type="evidence" value="ECO:0007669"/>
    <property type="project" value="InterPro"/>
</dbReference>
<dbReference type="GO" id="GO:0005524">
    <property type="term" value="F:ATP binding"/>
    <property type="evidence" value="ECO:0007669"/>
    <property type="project" value="UniProtKB-UniRule"/>
</dbReference>
<dbReference type="GO" id="GO:0004827">
    <property type="term" value="F:proline-tRNA ligase activity"/>
    <property type="evidence" value="ECO:0007669"/>
    <property type="project" value="UniProtKB-UniRule"/>
</dbReference>
<dbReference type="GO" id="GO:0006433">
    <property type="term" value="P:prolyl-tRNA aminoacylation"/>
    <property type="evidence" value="ECO:0007669"/>
    <property type="project" value="UniProtKB-UniRule"/>
</dbReference>
<dbReference type="CDD" id="cd04334">
    <property type="entry name" value="ProRS-INS"/>
    <property type="match status" value="1"/>
</dbReference>
<dbReference type="CDD" id="cd00861">
    <property type="entry name" value="ProRS_anticodon_short"/>
    <property type="match status" value="1"/>
</dbReference>
<dbReference type="CDD" id="cd00779">
    <property type="entry name" value="ProRS_core_prok"/>
    <property type="match status" value="1"/>
</dbReference>
<dbReference type="FunFam" id="3.30.930.10:FF:000015">
    <property type="entry name" value="Proline--tRNA ligase"/>
    <property type="match status" value="1"/>
</dbReference>
<dbReference type="Gene3D" id="3.40.50.800">
    <property type="entry name" value="Anticodon-binding domain"/>
    <property type="match status" value="1"/>
</dbReference>
<dbReference type="Gene3D" id="3.30.930.10">
    <property type="entry name" value="Bira Bifunctional Protein, Domain 2"/>
    <property type="match status" value="2"/>
</dbReference>
<dbReference type="HAMAP" id="MF_01569">
    <property type="entry name" value="Pro_tRNA_synth_type1"/>
    <property type="match status" value="1"/>
</dbReference>
<dbReference type="InterPro" id="IPR002314">
    <property type="entry name" value="aa-tRNA-synt_IIb"/>
</dbReference>
<dbReference type="InterPro" id="IPR006195">
    <property type="entry name" value="aa-tRNA-synth_II"/>
</dbReference>
<dbReference type="InterPro" id="IPR045864">
    <property type="entry name" value="aa-tRNA-synth_II/BPL/LPL"/>
</dbReference>
<dbReference type="InterPro" id="IPR004154">
    <property type="entry name" value="Anticodon-bd"/>
</dbReference>
<dbReference type="InterPro" id="IPR036621">
    <property type="entry name" value="Anticodon-bd_dom_sf"/>
</dbReference>
<dbReference type="InterPro" id="IPR002316">
    <property type="entry name" value="Pro-tRNA-ligase_IIa"/>
</dbReference>
<dbReference type="InterPro" id="IPR004500">
    <property type="entry name" value="Pro-tRNA-synth_IIa_bac-type"/>
</dbReference>
<dbReference type="InterPro" id="IPR023717">
    <property type="entry name" value="Pro-tRNA-Synthase_IIa_type1"/>
</dbReference>
<dbReference type="InterPro" id="IPR050062">
    <property type="entry name" value="Pro-tRNA_synthetase"/>
</dbReference>
<dbReference type="InterPro" id="IPR044140">
    <property type="entry name" value="ProRS_anticodon_short"/>
</dbReference>
<dbReference type="InterPro" id="IPR033730">
    <property type="entry name" value="ProRS_core_prok"/>
</dbReference>
<dbReference type="InterPro" id="IPR036754">
    <property type="entry name" value="YbaK/aa-tRNA-synt-asso_dom_sf"/>
</dbReference>
<dbReference type="InterPro" id="IPR007214">
    <property type="entry name" value="YbaK/aa-tRNA-synth-assoc-dom"/>
</dbReference>
<dbReference type="NCBIfam" id="NF006625">
    <property type="entry name" value="PRK09194.1"/>
    <property type="match status" value="1"/>
</dbReference>
<dbReference type="NCBIfam" id="TIGR00409">
    <property type="entry name" value="proS_fam_II"/>
    <property type="match status" value="1"/>
</dbReference>
<dbReference type="PANTHER" id="PTHR42753">
    <property type="entry name" value="MITOCHONDRIAL RIBOSOME PROTEIN L39/PROLYL-TRNA LIGASE FAMILY MEMBER"/>
    <property type="match status" value="1"/>
</dbReference>
<dbReference type="PANTHER" id="PTHR42753:SF2">
    <property type="entry name" value="PROLINE--TRNA LIGASE"/>
    <property type="match status" value="1"/>
</dbReference>
<dbReference type="Pfam" id="PF03129">
    <property type="entry name" value="HGTP_anticodon"/>
    <property type="match status" value="1"/>
</dbReference>
<dbReference type="Pfam" id="PF00587">
    <property type="entry name" value="tRNA-synt_2b"/>
    <property type="match status" value="1"/>
</dbReference>
<dbReference type="Pfam" id="PF04073">
    <property type="entry name" value="tRNA_edit"/>
    <property type="match status" value="1"/>
</dbReference>
<dbReference type="PRINTS" id="PR01046">
    <property type="entry name" value="TRNASYNTHPRO"/>
</dbReference>
<dbReference type="SUPFAM" id="SSF52954">
    <property type="entry name" value="Class II aaRS ABD-related"/>
    <property type="match status" value="1"/>
</dbReference>
<dbReference type="SUPFAM" id="SSF55681">
    <property type="entry name" value="Class II aaRS and biotin synthetases"/>
    <property type="match status" value="1"/>
</dbReference>
<dbReference type="SUPFAM" id="SSF55826">
    <property type="entry name" value="YbaK/ProRS associated domain"/>
    <property type="match status" value="1"/>
</dbReference>
<dbReference type="PROSITE" id="PS50862">
    <property type="entry name" value="AA_TRNA_LIGASE_II"/>
    <property type="match status" value="1"/>
</dbReference>
<sequence length="565" mass="63543">MKATQTLIATTKELPKEAVLISHQYMLKAGLIKKLASGIYTWMPLGLKVLQKIQNIVRDEMNKAGASELLLPSILPSELLQETHRWDKFGPELLKLHDRHNRDFCYGPTHEEPIVDMARDTIKSYKQLPLNLYQIQTKFRDEIRPRFGVMRAREFIMKDAYSFHENSQCLRNTYNTMYATYCNILDKIGLAYRPVKADTGAIGGDNSHEFQVLANAGEDIICYSNGSDYAANIELATYAKSDLSKRVNSQNTIEKIHTPNIKTIEKLCKEMSFDIKKTIKTMVIKDAGGNFFALVIRGDHELNETKINKLDQIIAPYTLATKEEIFSIFNANPGSLGIYNCPISIIADYSAIAITDLVCGANEDDYHFTNVNWDRDVTNYQIADIRNVVTGDISPDGKGTLELTNGIEVGHIFELEDVYSKPMNANIIGQDGKSKPMLMGCYGFGVSRVMAAAIEQSHDENGIIWPESIAPYQVAILPINYNKSDKIKEVADKLYQDLLGDGIDVLLDDRGARPGVMFADADLIGYSHHVVIGDRLLEQGLIEYKNRKTQEKQEITIAELIKILK</sequence>